<gene>
    <name evidence="8" type="primary">phm1</name>
</gene>
<sequence length="3961" mass="434821">MTSSEPIAIIGSACRFPGGADTPSKLWELLKEPRDLLQKVPEKRRWHSEAFYHKDPEHHGTSNVSSSYFLDDDPASFDNTFFNIQPSECEAIDPQQRMLMETVYDSVCSAGQTIDGLRGSSTAVYVGMMCDDWSAILTKDAESIPQYSATGMGRSIMSNRISYFFDWHGPSITLDTACSSSLVAVHLAVQALRNGDCGTAIAAGVNLCLSPGMYIATSNLHMLSEGARSRMWDKDVDGYARGEGIASVVLKPLSAAIRDGDHIECLIRATGVNQDGKTQGLTMPSATAQTALIRQTYERAGLDIEKPEDRPQFFHAHGTGTPAGDPQEAEAISTAFYSGGLSDKLYVGSIKTVIGHTEGTAGLASLIGTSLALQHGVIPPNLLFNELNPRLIPFYNNLEVPTSAKPWPQLLPGQARRASVNSFGFGGTNAHAIVEAYEPPTSSGAADNVFAPLVFSAATEKSLRASLSAHGDYLQANPQVPLRNFAYTLQERRSTLAFRAVIPASNTTDAVERINALLDDADSVELGTKHFATPHPRLLGVFTGQGAQWPRMGAQIVEASPYASKKLGELDTALATLPPDVRPSWTLREEILADLEVSKVAEAAISQPLCTAVQILLVDLLTAAGIRFDAVVGHSSGEIGAAYAAGFISAETAIRVAYLRGFYAKLAGAAEMKGSMMAVGTSYEDALEFCQLEHFMGRISVAAVNSDSSITLSGNEDAIMEAVEIFKDEGKFARQLKVDTAYHSVHMLPCSEPYLKAMESVTQSTAPRDNTAGPRPTWYSSVLDGAVMGPGEVNSEYWVSNMVNPVLFSAAVAAAVSATGPFNLALEVGPHPALKGPCLDTLAAASGDSIPYSGLLSRSKNDILELSSALGFVWANLGASSVRFGDFEKLISGVSENPRPVKDLPKYAFDHTRSFWQISRASGAQFLAQDPPHPILGKRCLERETSQHVEWRNILSPKELPWLQGHRIQGGMVFPAAGYVAMAIEAMKIAVGKSRMSLIHIENLHIGRAMAFNQETSTMECLFRLNIVNSSPDSMKAKFSCCSGAPYETGTTMVLNAEGTVTVTLAEPEPDAIPYMKPKNFNMTEIEVDRFYTQIHKLGYEYSAPFRGMLSIQRKNAYALGTMEDQGGSDWEDQLLVHPGMLDTAIQSSSAAFGCPGDGMMWTLYIPTGIQSIIINPYYTTYATEKQEVLPWETISRGMVNTRTSMDINIFSQDNAHTFIQVEGLELVPFTAARPEDDANIFSSLEYRIDSPSGDLAVINDGWDSHSSEAAIKGERVSFFYLRRLLEEITPEEKEKTLPHYRHLLNWAAHVVARVSAGKNPCVPASCMQDTQEIIDSMWDGVRNRADIRLIESVGRNLIKVVREGSGILEHMDGLFDFYDQGLGLDRANRHLARMVGQLAHRYPHMNIFEIGAGTGGSTRNILSAIREEFSTYTYTDVSSGFFEAAQELFQDYEDRMIYSTYNMEHEPTSQGFEEGHYDLLLASNVLHATDKLEEMMLSARKLLKPGGYLIALELTNNDSMRVGLPMGTLPGWWLGAETGRPWGPTVTLPQWDSLLRKCGFGGIDTSTPIQHRLQASTIFAAQAVDDRVNLLRNPLSLVNNLPLTDAPRLVIIGGESLATHAIANNISSLLASHYSEIVRIVSFADLDLDVLPYGTAVLSLADLDEPVFKDISPAKLDALKTLWRQAFNIVWVTQGARAAEPYSSMMIGLGRAMIHEYPTISLQLMDIDTIADESRATQLIAKEFIRLELLNTFKRGTKSNLDLLWSIESEVTFEGSARLIPRLYLNKEANARYNSARRSIETQVNWKASLVTVALQGDTYGLSKPSPLRLPISQPSDTKVTSLNVSHFLLQGLKIDGLNPLVLCAGTERSTGKHLLALSHSLESQPEIQTKWSAPLPSGSDPSQIIAAVAAEIIADQITKLHTRSGIMIIHEATEQLAVALHTRAQTLGCQIVFTTSSKDHAQRGWQFIPQNISRRLIKRTLPADSNVFIDLSYSSASVAAGRLISGSVSKSCAKYTSDAFYSASVSSEFDLESSTKVEEAFQQAYDSVTQSKTGLVDPITIPIQEIGDVSVSQKPLAVVVSSATNLAVKVEAIDSGVIFRQDKTYLLIGMSGQVGQSLCQWMVKCGARHVVLTSRRPLVHDDFIESMKDLGANVRTFALDITQRESLHKCYEEIVATMPPIAGVANGAMILRDSMFDGMTFQNLTTVLEPKVAGTRYLDELFYDAPLDFFIVLSSITSLVGNSSQSNYTAANMFMVALVEQRRKRGVPGSAISISALIGIGYVENSEFTGEYFENIGLRNISEQDLHQQFAEAILAGRPETQGSSEVAIGLIPFYPERDDKAQFHTDIKFNHLMLERKDAQIHGGKGSALPVRVQLAEAKTKDQAATIIKDGFMVRLKRTLMIGLDEVVNEKVPLVEQGIDSLMAVEIRAWFLKELDVDIPVLKVLGGSNITELLQEAMDRTPSTIIDFSSLSNAKAAAPVTNTATPPPEVQVTGSASDSSRSLTPDGLSTSRPSTPVRTPMTEINDPTPSFSLLSVAPDIAPKVPESVSPMSYGQARFWFLSDYLEDKTSFNMTVMFKLTGRLQVPRLERAVRTIAHRHDALRTRFFWGGEGDKRIAMQGISAESSIELEHVRINSEADAKNELRKMHEFVWDLDSHQAARMVLLTINENEHYFMTSGHHISWDGYGFTVLFIDLDAAYRGEPLSPNGPETQYPAFAAWQRDTYAAGAMKKSIDEYYRPMIDPEARPLPLFPFARAPNRPLLDHFEQFEAKVTLQPHVVSKLKQVSRKNGATMFHLYLAALQALVFRLLPEEQSFYLGVADANRLDKNFMGSLGFFLNLLPVRFDRTAPGTKSSDMIKDTRNKAYKALENSFVPWDVLLHELKIPRTNTEAPIFQLFVDYRQIVRERAQWCGCSMSDEDWLNARNGYDLTLGITDNPTGESLLSLRFQKKLYSEESTEMFLRSYVNVLEALASGKDLLVDDLPRWAGADVEEALNVGRGPQLELEWPVTVSHRIDQMIGTYASKPALQDEHNNCMSYEQMGHRINTIAAALIQAGTTTGTPVGVFQTPSSDWICSMLAIFRVGATYIPLDLRNSVARVSFIVEIAQPLILLTDRETTLHVAEIQASNATEIIIPDLSTTTMPLSMENQARPDSPAVTLFTSGTTGRPKGVVLTHANLRAQCEGYSRMVNLQSMTSVVLQQTNYNFDVSLDQIFAALAEGGCLYVVPASKRGDPQAITKIMAEKGVTYTVATPSEYETWFRYAPETLAECKSWGYAFGGGEHLNNGLIGEFAALSTRHIPELRLFNNYGPTEASLAITKGEVDFKRPDLEKHVPAGMTIPNYAVAIVDENLKPVPLETVGEIVAGGPGVAAGYLGQADLTREKFISGHDVHRLAAQHSDRWYRTGDRGYLRPDGALFVHGRILGDTQVKIRGFRVELQEIENVVLETAKGALTHAVVSLRGTGEDKFLTAHVVFAPDFAMHLRQDLIRHLEAALPLPSYMQPTVIVPLTKVPVTTNFKIDRNAIQAMPLPQAVAGTDNLANMEGRVAALWRIIIPHLTQELTPESDFFAVGGNSILLVKLQAAIKRELQSSPQLIDLINSSSLEGMARHVRAAFINRIDWDLETAVPADLKEDLEVLTSQPRKHGQDDLTVVITGSTGYLGRHVLAHLVDSSNVRQIICLVRPEHLQTASPLSTSSKIRLVAADISQPSLGLGAQTFAELAQITDIVFHCAANRSFWDGFESLRHVNFDAAKELARLCVANDAVLHFMSSGAVSKYNDISPPTDGSDGYIASKWAAEEFLRRVAKFGLRVQVHRPLALPSEKVSSLSQEDLKRVQDELPRLIAQIGQRPEFSAIHGHIDVRPVSDVATTLVEDMLVSSVQESGNEATVKNHAAHLRLQIKTFAEQIDADEELSKLPTMDALQWFGAAKRAGFGWLIGAMEMHIEGDDQSGTTTQVLVQR</sequence>
<name>PHM1_PYRSX</name>
<accession>A0A2Z5XAL7</accession>
<organism>
    <name type="scientific">Pyrenochaetopsis sp</name>
    <dbReference type="NCBI Taxonomy" id="1756125"/>
    <lineage>
        <taxon>Eukaryota</taxon>
        <taxon>Fungi</taxon>
        <taxon>Dikarya</taxon>
        <taxon>Ascomycota</taxon>
        <taxon>Pezizomycotina</taxon>
        <taxon>Dothideomycetes</taxon>
        <taxon>Pleosporomycetidae</taxon>
        <taxon>Pleosporales</taxon>
        <taxon>Pleosporineae</taxon>
        <taxon>Pyrenochaetopsidaceae</taxon>
        <taxon>Pyrenochaetopsis</taxon>
    </lineage>
</organism>
<proteinExistence type="evidence at protein level"/>
<evidence type="ECO:0000255" key="1"/>
<evidence type="ECO:0000255" key="2">
    <source>
        <dbReference type="PROSITE-ProRule" id="PRU00258"/>
    </source>
</evidence>
<evidence type="ECO:0000255" key="3">
    <source>
        <dbReference type="PROSITE-ProRule" id="PRU01348"/>
    </source>
</evidence>
<evidence type="ECO:0000255" key="4">
    <source>
        <dbReference type="PROSITE-ProRule" id="PRU01363"/>
    </source>
</evidence>
<evidence type="ECO:0000256" key="5">
    <source>
        <dbReference type="SAM" id="MobiDB-lite"/>
    </source>
</evidence>
<evidence type="ECO:0000269" key="6">
    <source>
    </source>
</evidence>
<evidence type="ECO:0000269" key="7">
    <source>
    </source>
</evidence>
<evidence type="ECO:0000303" key="8">
    <source>
    </source>
</evidence>
<evidence type="ECO:0000305" key="9"/>
<evidence type="ECO:0000305" key="10">
    <source>
    </source>
</evidence>
<reference key="1">
    <citation type="journal article" date="2018" name="Angew. Chem. Int. Ed.">
        <title>Control of the stereochemical course of [4+2] cycloaddition during trans-decalin formation by Fsa2-family enzymes.</title>
        <authorList>
            <person name="Kato N."/>
            <person name="Nogawa T."/>
            <person name="Takita R."/>
            <person name="Kinugasa K."/>
            <person name="Kanai M."/>
            <person name="Uchiyama M."/>
            <person name="Osada H."/>
            <person name="Takahashi S."/>
        </authorList>
    </citation>
    <scope>NUCLEOTIDE SEQUENCE [GENOMIC DNA]</scope>
    <scope>FUNCTION</scope>
    <scope>CATALYTIC ACTIVITY</scope>
    <scope>DISRUPTION PHENOTYPE</scope>
    <scope>DOMAIN</scope>
    <scope>PATHWAY</scope>
    <source>
        <strain>RK10-F058</strain>
    </source>
</reference>
<reference key="2">
    <citation type="journal article" date="2021" name="Angew. Chem. Int. Ed.">
        <title>Molecular basis for two stereoselective Diels-Alderases that produce decalin skeletons*.</title>
        <authorList>
            <person name="Fujiyama K."/>
            <person name="Kato N."/>
            <person name="Re S."/>
            <person name="Kinugasa K."/>
            <person name="Watanabe K."/>
            <person name="Takita R."/>
            <person name="Nogawa T."/>
            <person name="Hino T."/>
            <person name="Osada H."/>
            <person name="Sugita Y."/>
            <person name="Takahashi S."/>
            <person name="Nagano S."/>
        </authorList>
    </citation>
    <scope>FUNCTION</scope>
</reference>
<keyword id="KW-0436">Ligase</keyword>
<keyword id="KW-0489">Methyltransferase</keyword>
<keyword id="KW-0511">Multifunctional enzyme</keyword>
<keyword id="KW-0560">Oxidoreductase</keyword>
<keyword id="KW-0596">Phosphopantetheine</keyword>
<keyword id="KW-0597">Phosphoprotein</keyword>
<keyword id="KW-0677">Repeat</keyword>
<keyword id="KW-0808">Transferase</keyword>
<dbReference type="EC" id="2.3.1.-" evidence="6"/>
<dbReference type="EC" id="6.3.2.-" evidence="6"/>
<dbReference type="EMBL" id="LC361337">
    <property type="protein sequence ID" value="BBC43184.1"/>
    <property type="molecule type" value="Genomic_DNA"/>
</dbReference>
<dbReference type="SMR" id="A0A2Z5XAL7"/>
<dbReference type="GO" id="GO:0004315">
    <property type="term" value="F:3-oxoacyl-[acyl-carrier-protein] synthase activity"/>
    <property type="evidence" value="ECO:0007669"/>
    <property type="project" value="InterPro"/>
</dbReference>
<dbReference type="GO" id="GO:0004312">
    <property type="term" value="F:fatty acid synthase activity"/>
    <property type="evidence" value="ECO:0007669"/>
    <property type="project" value="TreeGrafter"/>
</dbReference>
<dbReference type="GO" id="GO:0016874">
    <property type="term" value="F:ligase activity"/>
    <property type="evidence" value="ECO:0007669"/>
    <property type="project" value="UniProtKB-KW"/>
</dbReference>
<dbReference type="GO" id="GO:0008168">
    <property type="term" value="F:methyltransferase activity"/>
    <property type="evidence" value="ECO:0007669"/>
    <property type="project" value="UniProtKB-KW"/>
</dbReference>
<dbReference type="GO" id="GO:0016491">
    <property type="term" value="F:oxidoreductase activity"/>
    <property type="evidence" value="ECO:0007669"/>
    <property type="project" value="UniProtKB-KW"/>
</dbReference>
<dbReference type="GO" id="GO:0031177">
    <property type="term" value="F:phosphopantetheine binding"/>
    <property type="evidence" value="ECO:0007669"/>
    <property type="project" value="InterPro"/>
</dbReference>
<dbReference type="GO" id="GO:0006633">
    <property type="term" value="P:fatty acid biosynthetic process"/>
    <property type="evidence" value="ECO:0007669"/>
    <property type="project" value="InterPro"/>
</dbReference>
<dbReference type="GO" id="GO:0032259">
    <property type="term" value="P:methylation"/>
    <property type="evidence" value="ECO:0007669"/>
    <property type="project" value="UniProtKB-KW"/>
</dbReference>
<dbReference type="GO" id="GO:0009403">
    <property type="term" value="P:toxin biosynthetic process"/>
    <property type="evidence" value="ECO:0007669"/>
    <property type="project" value="UniProtKB-ARBA"/>
</dbReference>
<dbReference type="CDD" id="cd05930">
    <property type="entry name" value="A_NRPS"/>
    <property type="match status" value="1"/>
</dbReference>
<dbReference type="CDD" id="cd02440">
    <property type="entry name" value="AdoMet_MTases"/>
    <property type="match status" value="1"/>
</dbReference>
<dbReference type="CDD" id="cd19532">
    <property type="entry name" value="C_PKS-NRPS"/>
    <property type="match status" value="1"/>
</dbReference>
<dbReference type="CDD" id="cd00833">
    <property type="entry name" value="PKS"/>
    <property type="match status" value="1"/>
</dbReference>
<dbReference type="FunFam" id="3.40.47.10:FF:000019">
    <property type="entry name" value="Polyketide synthase type I"/>
    <property type="match status" value="1"/>
</dbReference>
<dbReference type="Gene3D" id="3.30.300.30">
    <property type="match status" value="1"/>
</dbReference>
<dbReference type="Gene3D" id="3.40.47.10">
    <property type="match status" value="1"/>
</dbReference>
<dbReference type="Gene3D" id="1.10.1200.10">
    <property type="entry name" value="ACP-like"/>
    <property type="match status" value="2"/>
</dbReference>
<dbReference type="Gene3D" id="3.30.559.10">
    <property type="entry name" value="Chloramphenicol acetyltransferase-like domain"/>
    <property type="match status" value="1"/>
</dbReference>
<dbReference type="Gene3D" id="3.40.366.10">
    <property type="entry name" value="Malonyl-Coenzyme A Acyl Carrier Protein, domain 2"/>
    <property type="match status" value="1"/>
</dbReference>
<dbReference type="Gene3D" id="3.40.50.12780">
    <property type="entry name" value="N-terminal domain of ligase-like"/>
    <property type="match status" value="1"/>
</dbReference>
<dbReference type="Gene3D" id="3.40.50.720">
    <property type="entry name" value="NAD(P)-binding Rossmann-like Domain"/>
    <property type="match status" value="3"/>
</dbReference>
<dbReference type="Gene3D" id="3.30.559.30">
    <property type="entry name" value="Nonribosomal peptide synthetase, condensation domain"/>
    <property type="match status" value="1"/>
</dbReference>
<dbReference type="Gene3D" id="3.10.129.110">
    <property type="entry name" value="Polyketide synthase dehydratase"/>
    <property type="match status" value="1"/>
</dbReference>
<dbReference type="Gene3D" id="3.40.50.150">
    <property type="entry name" value="Vaccinia Virus protein VP39"/>
    <property type="match status" value="1"/>
</dbReference>
<dbReference type="InterPro" id="IPR010071">
    <property type="entry name" value="AA_adenyl_dom"/>
</dbReference>
<dbReference type="InterPro" id="IPR001227">
    <property type="entry name" value="Ac_transferase_dom_sf"/>
</dbReference>
<dbReference type="InterPro" id="IPR036736">
    <property type="entry name" value="ACP-like_sf"/>
</dbReference>
<dbReference type="InterPro" id="IPR014043">
    <property type="entry name" value="Acyl_transferase_dom"/>
</dbReference>
<dbReference type="InterPro" id="IPR016035">
    <property type="entry name" value="Acyl_Trfase/lysoPLipase"/>
</dbReference>
<dbReference type="InterPro" id="IPR045851">
    <property type="entry name" value="AMP-bd_C_sf"/>
</dbReference>
<dbReference type="InterPro" id="IPR000873">
    <property type="entry name" value="AMP-dep_synth/lig_dom"/>
</dbReference>
<dbReference type="InterPro" id="IPR042099">
    <property type="entry name" value="ANL_N_sf"/>
</dbReference>
<dbReference type="InterPro" id="IPR023213">
    <property type="entry name" value="CAT-like_dom_sf"/>
</dbReference>
<dbReference type="InterPro" id="IPR001242">
    <property type="entry name" value="Condensatn"/>
</dbReference>
<dbReference type="InterPro" id="IPR013120">
    <property type="entry name" value="Far_NAD-bd"/>
</dbReference>
<dbReference type="InterPro" id="IPR018201">
    <property type="entry name" value="Ketoacyl_synth_AS"/>
</dbReference>
<dbReference type="InterPro" id="IPR014031">
    <property type="entry name" value="Ketoacyl_synth_C"/>
</dbReference>
<dbReference type="InterPro" id="IPR014030">
    <property type="entry name" value="Ketoacyl_synth_N"/>
</dbReference>
<dbReference type="InterPro" id="IPR016036">
    <property type="entry name" value="Malonyl_transacylase_ACP-bd"/>
</dbReference>
<dbReference type="InterPro" id="IPR013217">
    <property type="entry name" value="Methyltransf_12"/>
</dbReference>
<dbReference type="InterPro" id="IPR036291">
    <property type="entry name" value="NAD(P)-bd_dom_sf"/>
</dbReference>
<dbReference type="InterPro" id="IPR032821">
    <property type="entry name" value="PKS_assoc"/>
</dbReference>
<dbReference type="InterPro" id="IPR020841">
    <property type="entry name" value="PKS_Beta-ketoAc_synthase_dom"/>
</dbReference>
<dbReference type="InterPro" id="IPR042104">
    <property type="entry name" value="PKS_dehydratase_sf"/>
</dbReference>
<dbReference type="InterPro" id="IPR020807">
    <property type="entry name" value="PKS_DH"/>
</dbReference>
<dbReference type="InterPro" id="IPR049551">
    <property type="entry name" value="PKS_DH_C"/>
</dbReference>
<dbReference type="InterPro" id="IPR049552">
    <property type="entry name" value="PKS_DH_N"/>
</dbReference>
<dbReference type="InterPro" id="IPR013968">
    <property type="entry name" value="PKS_KR"/>
</dbReference>
<dbReference type="InterPro" id="IPR049900">
    <property type="entry name" value="PKS_mFAS_DH"/>
</dbReference>
<dbReference type="InterPro" id="IPR050091">
    <property type="entry name" value="PKS_NRPS_Biosynth_Enz"/>
</dbReference>
<dbReference type="InterPro" id="IPR020806">
    <property type="entry name" value="PKS_PP-bd"/>
</dbReference>
<dbReference type="InterPro" id="IPR009081">
    <property type="entry name" value="PP-bd_ACP"/>
</dbReference>
<dbReference type="InterPro" id="IPR029063">
    <property type="entry name" value="SAM-dependent_MTases_sf"/>
</dbReference>
<dbReference type="InterPro" id="IPR016039">
    <property type="entry name" value="Thiolase-like"/>
</dbReference>
<dbReference type="NCBIfam" id="TIGR01733">
    <property type="entry name" value="AA-adenyl-dom"/>
    <property type="match status" value="1"/>
</dbReference>
<dbReference type="PANTHER" id="PTHR43775">
    <property type="entry name" value="FATTY ACID SYNTHASE"/>
    <property type="match status" value="1"/>
</dbReference>
<dbReference type="PANTHER" id="PTHR43775:SF20">
    <property type="entry name" value="HYBRID PKS-NRPS SYNTHETASE APDA"/>
    <property type="match status" value="1"/>
</dbReference>
<dbReference type="Pfam" id="PF00698">
    <property type="entry name" value="Acyl_transf_1"/>
    <property type="match status" value="1"/>
</dbReference>
<dbReference type="Pfam" id="PF00501">
    <property type="entry name" value="AMP-binding"/>
    <property type="match status" value="1"/>
</dbReference>
<dbReference type="Pfam" id="PF00668">
    <property type="entry name" value="Condensation"/>
    <property type="match status" value="1"/>
</dbReference>
<dbReference type="Pfam" id="PF16197">
    <property type="entry name" value="KAsynt_C_assoc"/>
    <property type="match status" value="1"/>
</dbReference>
<dbReference type="Pfam" id="PF00109">
    <property type="entry name" value="ketoacyl-synt"/>
    <property type="match status" value="1"/>
</dbReference>
<dbReference type="Pfam" id="PF02801">
    <property type="entry name" value="Ketoacyl-synt_C"/>
    <property type="match status" value="1"/>
</dbReference>
<dbReference type="Pfam" id="PF08659">
    <property type="entry name" value="KR"/>
    <property type="match status" value="1"/>
</dbReference>
<dbReference type="Pfam" id="PF08242">
    <property type="entry name" value="Methyltransf_12"/>
    <property type="match status" value="1"/>
</dbReference>
<dbReference type="Pfam" id="PF07993">
    <property type="entry name" value="NAD_binding_4"/>
    <property type="match status" value="1"/>
</dbReference>
<dbReference type="Pfam" id="PF21089">
    <property type="entry name" value="PKS_DH_N"/>
    <property type="match status" value="1"/>
</dbReference>
<dbReference type="Pfam" id="PF00550">
    <property type="entry name" value="PP-binding"/>
    <property type="match status" value="2"/>
</dbReference>
<dbReference type="Pfam" id="PF14765">
    <property type="entry name" value="PS-DH"/>
    <property type="match status" value="1"/>
</dbReference>
<dbReference type="SMART" id="SM00827">
    <property type="entry name" value="PKS_AT"/>
    <property type="match status" value="1"/>
</dbReference>
<dbReference type="SMART" id="SM00826">
    <property type="entry name" value="PKS_DH"/>
    <property type="match status" value="1"/>
</dbReference>
<dbReference type="SMART" id="SM00822">
    <property type="entry name" value="PKS_KR"/>
    <property type="match status" value="1"/>
</dbReference>
<dbReference type="SMART" id="SM00825">
    <property type="entry name" value="PKS_KS"/>
    <property type="match status" value="1"/>
</dbReference>
<dbReference type="SMART" id="SM00823">
    <property type="entry name" value="PKS_PP"/>
    <property type="match status" value="2"/>
</dbReference>
<dbReference type="SUPFAM" id="SSF56801">
    <property type="entry name" value="Acetyl-CoA synthetase-like"/>
    <property type="match status" value="1"/>
</dbReference>
<dbReference type="SUPFAM" id="SSF47336">
    <property type="entry name" value="ACP-like"/>
    <property type="match status" value="2"/>
</dbReference>
<dbReference type="SUPFAM" id="SSF52777">
    <property type="entry name" value="CoA-dependent acyltransferases"/>
    <property type="match status" value="2"/>
</dbReference>
<dbReference type="SUPFAM" id="SSF52151">
    <property type="entry name" value="FabD/lysophospholipase-like"/>
    <property type="match status" value="1"/>
</dbReference>
<dbReference type="SUPFAM" id="SSF51735">
    <property type="entry name" value="NAD(P)-binding Rossmann-fold domains"/>
    <property type="match status" value="3"/>
</dbReference>
<dbReference type="SUPFAM" id="SSF55048">
    <property type="entry name" value="Probable ACP-binding domain of malonyl-CoA ACP transacylase"/>
    <property type="match status" value="1"/>
</dbReference>
<dbReference type="SUPFAM" id="SSF53335">
    <property type="entry name" value="S-adenosyl-L-methionine-dependent methyltransferases"/>
    <property type="match status" value="1"/>
</dbReference>
<dbReference type="SUPFAM" id="SSF53901">
    <property type="entry name" value="Thiolase-like"/>
    <property type="match status" value="1"/>
</dbReference>
<dbReference type="PROSITE" id="PS50075">
    <property type="entry name" value="CARRIER"/>
    <property type="match status" value="2"/>
</dbReference>
<dbReference type="PROSITE" id="PS00606">
    <property type="entry name" value="KS3_1"/>
    <property type="match status" value="1"/>
</dbReference>
<dbReference type="PROSITE" id="PS52004">
    <property type="entry name" value="KS3_2"/>
    <property type="match status" value="1"/>
</dbReference>
<dbReference type="PROSITE" id="PS52019">
    <property type="entry name" value="PKS_MFAS_DH"/>
    <property type="match status" value="1"/>
</dbReference>
<comment type="function">
    <text evidence="6 7">Hybrid PKS-NRPS synthetase; part of the gene cluster that mediates the biosynthesis of the trans-fused decalin-containing tetramic acid phomasetin, the stereochemical opposite of the HIV-1 integrase inhibitor equisetin (PubMed:29972614). The PKS module of phm1 together with the enoylreductase phm4 catalyze the formation of the polyketide unit which is then conjugated to L-serine by the condensation domain of the phm1 NRPS module (PubMed:29972614). Activity of the Dieckmann cyclase domain (RED) of phm1 results in release of the Dieckmann product intermediate (PubMed:29972614). The Diels-Alderase phm7 then uses the Dieckmann product of phm1 as substrate and catalyzes the Diels-Alder cycloaddition to form the decalin ring of N-desmethylphomasetin (PubMed:29972614, PubMed:34121297). N-desmethylphomasetin is further methylated to phomasetin by the methyltransferase phm5 (PubMed:29972614).</text>
</comment>
<comment type="pathway">
    <text evidence="6">Secondary metabolite biosynthesis.</text>
</comment>
<comment type="domain">
    <text evidence="10">NRP synthetases are composed of discrete domains (adenylation (A), thiolation (T) or peptidyl carrier protein (PCP) and condensation (C) domains) which when grouped together are referred to as a single module. Each module is responsible for the recognition (via the A domain) and incorporation of a single amino acid into the growing peptide product. Thus, an NRP synthetase is generally composed of one or more modules and can terminate in a thioesterase domain (TE) that releases the newly synthesized peptide from the enzyme. Occasionally, epimerase (E) domains (responsible for L- to D- amino acid conversion) are present within the NRP synthetase. CcsA also contains a polyketide synthase module (PKS) consisting of several catalytic domains including a ketoacyl synthase domain (KS), an acyl transferase domain (AT), a dehydratase domain (DH), a methyltransferase domain (MT), and a ketoreductase domain (KR). Instead of a thioesterase domain (TE), phm1 finishes with a reductase-like domain (R) for peptide release. Phm1 has the following architecture: KS-MAT-DH-MT-KR-PCP-C-A-T-R.</text>
</comment>
<comment type="disruption phenotype">
    <text evidence="6">Impairs the production of phomasetin (PubMed:29972614). Phm7 are involved in control of the stereochemistry at C3 and C6 during trans-decalin formation (PubMed:29972614).</text>
</comment>
<comment type="similarity">
    <text evidence="9">In the C-terminal section; belongs to the NRP synthetase family.</text>
</comment>
<protein>
    <recommendedName>
        <fullName evidence="8">Hybrid PKS-NRPS synthetase phm1</fullName>
        <shortName evidence="8">PKS-NRPS phm1</shortName>
        <ecNumber evidence="6">2.3.1.-</ecNumber>
        <ecNumber evidence="6">6.3.2.-</ecNumber>
    </recommendedName>
    <alternativeName>
        <fullName evidence="8">Phomasetin biosynthesis cluster protein 1</fullName>
    </alternativeName>
</protein>
<feature type="chain" id="PRO_0000453334" description="Hybrid PKS-NRPS synthetase phm1">
    <location>
        <begin position="1"/>
        <end position="3961"/>
    </location>
</feature>
<feature type="domain" description="Ketosynthase family 3 (KS3)" evidence="3">
    <location>
        <begin position="4"/>
        <end position="436"/>
    </location>
</feature>
<feature type="domain" description="PKS/mFAS DH" evidence="4">
    <location>
        <begin position="933"/>
        <end position="1236"/>
    </location>
</feature>
<feature type="domain" description="Carrier 1" evidence="2">
    <location>
        <begin position="2386"/>
        <end position="2464"/>
    </location>
</feature>
<feature type="domain" description="Carrier 2" evidence="2">
    <location>
        <begin position="3542"/>
        <end position="3616"/>
    </location>
</feature>
<feature type="region of interest" description="Malonyl-CoA:ACP transacylase (MAT) domain" evidence="1">
    <location>
        <begin position="541"/>
        <end position="867"/>
    </location>
</feature>
<feature type="region of interest" description="Dehydratase (DH) domain" evidence="1">
    <location>
        <begin position="933"/>
        <end position="1234"/>
    </location>
</feature>
<feature type="region of interest" description="N-terminal hotdog fold" evidence="4">
    <location>
        <begin position="933"/>
        <end position="1068"/>
    </location>
</feature>
<feature type="region of interest" description="C-terminal hotdog fold" evidence="4">
    <location>
        <begin position="1083"/>
        <end position="1236"/>
    </location>
</feature>
<feature type="region of interest" description="Methyltransferase (MT) domain" evidence="1">
    <location>
        <begin position="1376"/>
        <end position="1569"/>
    </location>
</feature>
<feature type="region of interest" description="Ketoreductase (KR) domain" evidence="1">
    <location>
        <begin position="2106"/>
        <end position="2277"/>
    </location>
</feature>
<feature type="region of interest" description="Disordered" evidence="5">
    <location>
        <begin position="2482"/>
        <end position="2527"/>
    </location>
</feature>
<feature type="region of interest" description="Condensation (C) domain" evidence="1">
    <location>
        <begin position="2553"/>
        <end position="2993"/>
    </location>
</feature>
<feature type="region of interest" description="Adenylation (A) (KR) domain" evidence="1">
    <location>
        <begin position="3019"/>
        <end position="3424"/>
    </location>
</feature>
<feature type="region of interest" description="Reductase (RED) domain" evidence="1">
    <location>
        <begin position="3725"/>
        <end position="3871"/>
    </location>
</feature>
<feature type="compositionally biased region" description="Polar residues" evidence="5">
    <location>
        <begin position="2495"/>
        <end position="2520"/>
    </location>
</feature>
<feature type="active site" description="For beta-ketoacyl synthase activity" evidence="3">
    <location>
        <position position="178"/>
    </location>
</feature>
<feature type="active site" description="For beta-ketoacyl synthase activity" evidence="3">
    <location>
        <position position="317"/>
    </location>
</feature>
<feature type="active site" description="For beta-ketoacyl synthase activity" evidence="3">
    <location>
        <position position="356"/>
    </location>
</feature>
<feature type="active site" description="Proton acceptor; for dehydratase activity" evidence="4">
    <location>
        <position position="966"/>
    </location>
</feature>
<feature type="active site" description="Proton donor; for dehydratase activity" evidence="4">
    <location>
        <position position="1143"/>
    </location>
</feature>
<feature type="modified residue" description="O-(pantetheine 4'-phosphoryl)serine" evidence="2">
    <location>
        <position position="2424"/>
    </location>
</feature>
<feature type="modified residue" description="O-(pantetheine 4'-phosphoryl)serine" evidence="2">
    <location>
        <position position="3576"/>
    </location>
</feature>